<evidence type="ECO:0000255" key="1">
    <source>
        <dbReference type="HAMAP-Rule" id="MF_00123"/>
    </source>
</evidence>
<name>SYR_SINMW</name>
<sequence>MNLFTDFEARINRILESIDVIREKRSELDFRRINVEPPRDASHGDVATNAAMVLAKPLGMNPRALADLIGDKLAQDPEVAEVSVAGPGFINVRLSVSYWQKLLAVITRAGVDYGRSALGAGRKINVEYVSANPTGPMHVGHCRGAVVGDALANLLAFSGFDVTKEYYINDAGSQIEVLARSAFLRYRQALGEDIGEIPAGLYPGDYLVPAGEALADEYGTSLRIMPEDKWMPLVKERVIDAMMAMIREDLAALNVNHDVFFSERALHDNGAARIRTAINDLTFKGHVYKGMLPPPKGQLPEDWEDREQTLFRSTEVGDDIDRPLIKSDGSYTYFAADVAYFKDKFDRGFDEMIYVLGADHGGYVKRLEALARAISGGSAKLTVLLCQLVKLYRNGEPVKMSKRSGDFVTLREVVDEVGRDPVRFMMLYRKSSEPLDFDFAKVTEQSKDNPVFYVQYAHARCRSVFRQAAEAFPDLDLSSIDLAGAAGAIADPTEMQLVAKLAEYPRVVEAAAFSHEPHRIAFYLYDLAAVFHGHWNKGKENPALRFVNDKNRELSIARLGLVHAVASVLKSGLSITGTSAPDEMR</sequence>
<gene>
    <name evidence="1" type="primary">argS</name>
    <name type="ordered locus">Smed_1158</name>
</gene>
<protein>
    <recommendedName>
        <fullName evidence="1">Arginine--tRNA ligase</fullName>
        <ecNumber evidence="1">6.1.1.19</ecNumber>
    </recommendedName>
    <alternativeName>
        <fullName evidence="1">Arginyl-tRNA synthetase</fullName>
        <shortName evidence="1">ArgRS</shortName>
    </alternativeName>
</protein>
<reference key="1">
    <citation type="submission" date="2007-06" db="EMBL/GenBank/DDBJ databases">
        <title>Complete sequence of Sinorhizobium medicae WSM419 chromosome.</title>
        <authorList>
            <consortium name="US DOE Joint Genome Institute"/>
            <person name="Copeland A."/>
            <person name="Lucas S."/>
            <person name="Lapidus A."/>
            <person name="Barry K."/>
            <person name="Glavina del Rio T."/>
            <person name="Dalin E."/>
            <person name="Tice H."/>
            <person name="Pitluck S."/>
            <person name="Chain P."/>
            <person name="Malfatti S."/>
            <person name="Shin M."/>
            <person name="Vergez L."/>
            <person name="Schmutz J."/>
            <person name="Larimer F."/>
            <person name="Land M."/>
            <person name="Hauser L."/>
            <person name="Kyrpides N."/>
            <person name="Mikhailova N."/>
            <person name="Reeve W.G."/>
            <person name="Richardson P."/>
        </authorList>
    </citation>
    <scope>NUCLEOTIDE SEQUENCE [LARGE SCALE GENOMIC DNA]</scope>
    <source>
        <strain>WSM419</strain>
    </source>
</reference>
<keyword id="KW-0030">Aminoacyl-tRNA synthetase</keyword>
<keyword id="KW-0067">ATP-binding</keyword>
<keyword id="KW-0963">Cytoplasm</keyword>
<keyword id="KW-0436">Ligase</keyword>
<keyword id="KW-0547">Nucleotide-binding</keyword>
<keyword id="KW-0648">Protein biosynthesis</keyword>
<accession>A6U8M9</accession>
<organism>
    <name type="scientific">Sinorhizobium medicae (strain WSM419)</name>
    <name type="common">Ensifer medicae</name>
    <dbReference type="NCBI Taxonomy" id="366394"/>
    <lineage>
        <taxon>Bacteria</taxon>
        <taxon>Pseudomonadati</taxon>
        <taxon>Pseudomonadota</taxon>
        <taxon>Alphaproteobacteria</taxon>
        <taxon>Hyphomicrobiales</taxon>
        <taxon>Rhizobiaceae</taxon>
        <taxon>Sinorhizobium/Ensifer group</taxon>
        <taxon>Sinorhizobium</taxon>
    </lineage>
</organism>
<feature type="chain" id="PRO_1000018124" description="Arginine--tRNA ligase">
    <location>
        <begin position="1"/>
        <end position="585"/>
    </location>
</feature>
<feature type="short sequence motif" description="'HIGH' region">
    <location>
        <begin position="131"/>
        <end position="141"/>
    </location>
</feature>
<dbReference type="EC" id="6.1.1.19" evidence="1"/>
<dbReference type="EMBL" id="CP000738">
    <property type="protein sequence ID" value="ABR60009.1"/>
    <property type="molecule type" value="Genomic_DNA"/>
</dbReference>
<dbReference type="RefSeq" id="WP_011975328.1">
    <property type="nucleotide sequence ID" value="NC_009636.1"/>
</dbReference>
<dbReference type="RefSeq" id="YP_001326844.1">
    <property type="nucleotide sequence ID" value="NC_009636.1"/>
</dbReference>
<dbReference type="SMR" id="A6U8M9"/>
<dbReference type="STRING" id="366394.Smed_1158"/>
<dbReference type="GeneID" id="61612062"/>
<dbReference type="KEGG" id="smd:Smed_1158"/>
<dbReference type="PATRIC" id="fig|366394.8.peg.4284"/>
<dbReference type="eggNOG" id="COG0018">
    <property type="taxonomic scope" value="Bacteria"/>
</dbReference>
<dbReference type="HOGENOM" id="CLU_006406_0_1_5"/>
<dbReference type="OrthoDB" id="9803211at2"/>
<dbReference type="Proteomes" id="UP000001108">
    <property type="component" value="Chromosome"/>
</dbReference>
<dbReference type="GO" id="GO:0005737">
    <property type="term" value="C:cytoplasm"/>
    <property type="evidence" value="ECO:0007669"/>
    <property type="project" value="UniProtKB-SubCell"/>
</dbReference>
<dbReference type="GO" id="GO:0004814">
    <property type="term" value="F:arginine-tRNA ligase activity"/>
    <property type="evidence" value="ECO:0007669"/>
    <property type="project" value="UniProtKB-UniRule"/>
</dbReference>
<dbReference type="GO" id="GO:0005524">
    <property type="term" value="F:ATP binding"/>
    <property type="evidence" value="ECO:0007669"/>
    <property type="project" value="UniProtKB-UniRule"/>
</dbReference>
<dbReference type="GO" id="GO:0006420">
    <property type="term" value="P:arginyl-tRNA aminoacylation"/>
    <property type="evidence" value="ECO:0007669"/>
    <property type="project" value="UniProtKB-UniRule"/>
</dbReference>
<dbReference type="CDD" id="cd00671">
    <property type="entry name" value="ArgRS_core"/>
    <property type="match status" value="1"/>
</dbReference>
<dbReference type="FunFam" id="1.10.730.10:FF:000008">
    <property type="entry name" value="Arginine--tRNA ligase"/>
    <property type="match status" value="1"/>
</dbReference>
<dbReference type="Gene3D" id="3.30.1360.70">
    <property type="entry name" value="Arginyl tRNA synthetase N-terminal domain"/>
    <property type="match status" value="1"/>
</dbReference>
<dbReference type="Gene3D" id="3.40.50.620">
    <property type="entry name" value="HUPs"/>
    <property type="match status" value="1"/>
</dbReference>
<dbReference type="Gene3D" id="1.10.730.10">
    <property type="entry name" value="Isoleucyl-tRNA Synthetase, Domain 1"/>
    <property type="match status" value="1"/>
</dbReference>
<dbReference type="HAMAP" id="MF_00123">
    <property type="entry name" value="Arg_tRNA_synth"/>
    <property type="match status" value="1"/>
</dbReference>
<dbReference type="InterPro" id="IPR001412">
    <property type="entry name" value="aa-tRNA-synth_I_CS"/>
</dbReference>
<dbReference type="InterPro" id="IPR001278">
    <property type="entry name" value="Arg-tRNA-ligase"/>
</dbReference>
<dbReference type="InterPro" id="IPR005148">
    <property type="entry name" value="Arg-tRNA-synth_N"/>
</dbReference>
<dbReference type="InterPro" id="IPR036695">
    <property type="entry name" value="Arg-tRNA-synth_N_sf"/>
</dbReference>
<dbReference type="InterPro" id="IPR035684">
    <property type="entry name" value="ArgRS_core"/>
</dbReference>
<dbReference type="InterPro" id="IPR008909">
    <property type="entry name" value="DALR_anticod-bd"/>
</dbReference>
<dbReference type="InterPro" id="IPR014729">
    <property type="entry name" value="Rossmann-like_a/b/a_fold"/>
</dbReference>
<dbReference type="InterPro" id="IPR009080">
    <property type="entry name" value="tRNAsynth_Ia_anticodon-bd"/>
</dbReference>
<dbReference type="NCBIfam" id="TIGR00456">
    <property type="entry name" value="argS"/>
    <property type="match status" value="1"/>
</dbReference>
<dbReference type="PANTHER" id="PTHR11956:SF5">
    <property type="entry name" value="ARGININE--TRNA LIGASE, CYTOPLASMIC"/>
    <property type="match status" value="1"/>
</dbReference>
<dbReference type="PANTHER" id="PTHR11956">
    <property type="entry name" value="ARGINYL-TRNA SYNTHETASE"/>
    <property type="match status" value="1"/>
</dbReference>
<dbReference type="Pfam" id="PF03485">
    <property type="entry name" value="Arg_tRNA_synt_N"/>
    <property type="match status" value="1"/>
</dbReference>
<dbReference type="Pfam" id="PF05746">
    <property type="entry name" value="DALR_1"/>
    <property type="match status" value="1"/>
</dbReference>
<dbReference type="Pfam" id="PF00750">
    <property type="entry name" value="tRNA-synt_1d"/>
    <property type="match status" value="2"/>
</dbReference>
<dbReference type="PRINTS" id="PR01038">
    <property type="entry name" value="TRNASYNTHARG"/>
</dbReference>
<dbReference type="SMART" id="SM01016">
    <property type="entry name" value="Arg_tRNA_synt_N"/>
    <property type="match status" value="1"/>
</dbReference>
<dbReference type="SMART" id="SM00836">
    <property type="entry name" value="DALR_1"/>
    <property type="match status" value="1"/>
</dbReference>
<dbReference type="SUPFAM" id="SSF47323">
    <property type="entry name" value="Anticodon-binding domain of a subclass of class I aminoacyl-tRNA synthetases"/>
    <property type="match status" value="1"/>
</dbReference>
<dbReference type="SUPFAM" id="SSF55190">
    <property type="entry name" value="Arginyl-tRNA synthetase (ArgRS), N-terminal 'additional' domain"/>
    <property type="match status" value="1"/>
</dbReference>
<dbReference type="SUPFAM" id="SSF52374">
    <property type="entry name" value="Nucleotidylyl transferase"/>
    <property type="match status" value="1"/>
</dbReference>
<dbReference type="PROSITE" id="PS00178">
    <property type="entry name" value="AA_TRNA_LIGASE_I"/>
    <property type="match status" value="1"/>
</dbReference>
<comment type="catalytic activity">
    <reaction evidence="1">
        <text>tRNA(Arg) + L-arginine + ATP = L-arginyl-tRNA(Arg) + AMP + diphosphate</text>
        <dbReference type="Rhea" id="RHEA:20301"/>
        <dbReference type="Rhea" id="RHEA-COMP:9658"/>
        <dbReference type="Rhea" id="RHEA-COMP:9673"/>
        <dbReference type="ChEBI" id="CHEBI:30616"/>
        <dbReference type="ChEBI" id="CHEBI:32682"/>
        <dbReference type="ChEBI" id="CHEBI:33019"/>
        <dbReference type="ChEBI" id="CHEBI:78442"/>
        <dbReference type="ChEBI" id="CHEBI:78513"/>
        <dbReference type="ChEBI" id="CHEBI:456215"/>
        <dbReference type="EC" id="6.1.1.19"/>
    </reaction>
</comment>
<comment type="subunit">
    <text evidence="1">Monomer.</text>
</comment>
<comment type="subcellular location">
    <subcellularLocation>
        <location evidence="1">Cytoplasm</location>
    </subcellularLocation>
</comment>
<comment type="similarity">
    <text evidence="1">Belongs to the class-I aminoacyl-tRNA synthetase family.</text>
</comment>
<proteinExistence type="inferred from homology"/>